<name>RS9_STRPC</name>
<protein>
    <recommendedName>
        <fullName evidence="1">Small ribosomal subunit protein uS9</fullName>
    </recommendedName>
    <alternativeName>
        <fullName evidence="2">30S ribosomal protein S9</fullName>
    </alternativeName>
</protein>
<proteinExistence type="inferred from homology"/>
<organism>
    <name type="scientific">Streptococcus pyogenes serotype M12 (strain MGAS9429)</name>
    <dbReference type="NCBI Taxonomy" id="370551"/>
    <lineage>
        <taxon>Bacteria</taxon>
        <taxon>Bacillati</taxon>
        <taxon>Bacillota</taxon>
        <taxon>Bacilli</taxon>
        <taxon>Lactobacillales</taxon>
        <taxon>Streptococcaceae</taxon>
        <taxon>Streptococcus</taxon>
    </lineage>
</organism>
<sequence length="130" mass="14235">MAQAQYAGTGRRKNAVARVRLVPGTGKITVNKKDVEEYIPHADLRLIINQPFAVTSTEGSYDVFVNVVGGGYGGQSGAIRHGIARALLQVDPDFRDSLKRAGLLTRDARMVERKKPGLKKARKASQFSKR</sequence>
<evidence type="ECO:0000255" key="1">
    <source>
        <dbReference type="HAMAP-Rule" id="MF_00532"/>
    </source>
</evidence>
<evidence type="ECO:0000305" key="2"/>
<reference key="1">
    <citation type="journal article" date="2006" name="Proc. Natl. Acad. Sci. U.S.A.">
        <title>Molecular genetic anatomy of inter- and intraserotype variation in the human bacterial pathogen group A Streptococcus.</title>
        <authorList>
            <person name="Beres S.B."/>
            <person name="Richter E.W."/>
            <person name="Nagiec M.J."/>
            <person name="Sumby P."/>
            <person name="Porcella S.F."/>
            <person name="DeLeo F.R."/>
            <person name="Musser J.M."/>
        </authorList>
    </citation>
    <scope>NUCLEOTIDE SEQUENCE [LARGE SCALE GENOMIC DNA]</scope>
    <source>
        <strain>MGAS9429</strain>
    </source>
</reference>
<dbReference type="EMBL" id="CP000259">
    <property type="protein sequence ID" value="ABF32834.1"/>
    <property type="molecule type" value="Genomic_DNA"/>
</dbReference>
<dbReference type="RefSeq" id="WP_002982716.1">
    <property type="nucleotide sequence ID" value="NC_008021.1"/>
</dbReference>
<dbReference type="SMR" id="Q1JJY9"/>
<dbReference type="GeneID" id="83689365"/>
<dbReference type="KEGG" id="spk:MGAS9429_Spy1647"/>
<dbReference type="HOGENOM" id="CLU_046483_2_1_9"/>
<dbReference type="Proteomes" id="UP000002433">
    <property type="component" value="Chromosome"/>
</dbReference>
<dbReference type="GO" id="GO:0022627">
    <property type="term" value="C:cytosolic small ribosomal subunit"/>
    <property type="evidence" value="ECO:0007669"/>
    <property type="project" value="TreeGrafter"/>
</dbReference>
<dbReference type="GO" id="GO:0003723">
    <property type="term" value="F:RNA binding"/>
    <property type="evidence" value="ECO:0007669"/>
    <property type="project" value="TreeGrafter"/>
</dbReference>
<dbReference type="GO" id="GO:0003735">
    <property type="term" value="F:structural constituent of ribosome"/>
    <property type="evidence" value="ECO:0007669"/>
    <property type="project" value="InterPro"/>
</dbReference>
<dbReference type="GO" id="GO:0006412">
    <property type="term" value="P:translation"/>
    <property type="evidence" value="ECO:0007669"/>
    <property type="project" value="UniProtKB-UniRule"/>
</dbReference>
<dbReference type="FunFam" id="3.30.230.10:FF:000001">
    <property type="entry name" value="30S ribosomal protein S9"/>
    <property type="match status" value="1"/>
</dbReference>
<dbReference type="Gene3D" id="3.30.230.10">
    <property type="match status" value="1"/>
</dbReference>
<dbReference type="HAMAP" id="MF_00532_B">
    <property type="entry name" value="Ribosomal_uS9_B"/>
    <property type="match status" value="1"/>
</dbReference>
<dbReference type="InterPro" id="IPR020568">
    <property type="entry name" value="Ribosomal_Su5_D2-typ_SF"/>
</dbReference>
<dbReference type="InterPro" id="IPR000754">
    <property type="entry name" value="Ribosomal_uS9"/>
</dbReference>
<dbReference type="InterPro" id="IPR023035">
    <property type="entry name" value="Ribosomal_uS9_bac/plastid"/>
</dbReference>
<dbReference type="InterPro" id="IPR020574">
    <property type="entry name" value="Ribosomal_uS9_CS"/>
</dbReference>
<dbReference type="InterPro" id="IPR014721">
    <property type="entry name" value="Ribsml_uS5_D2-typ_fold_subgr"/>
</dbReference>
<dbReference type="NCBIfam" id="NF001099">
    <property type="entry name" value="PRK00132.1"/>
    <property type="match status" value="1"/>
</dbReference>
<dbReference type="PANTHER" id="PTHR21569">
    <property type="entry name" value="RIBOSOMAL PROTEIN S9"/>
    <property type="match status" value="1"/>
</dbReference>
<dbReference type="PANTHER" id="PTHR21569:SF1">
    <property type="entry name" value="SMALL RIBOSOMAL SUBUNIT PROTEIN US9M"/>
    <property type="match status" value="1"/>
</dbReference>
<dbReference type="Pfam" id="PF00380">
    <property type="entry name" value="Ribosomal_S9"/>
    <property type="match status" value="1"/>
</dbReference>
<dbReference type="SUPFAM" id="SSF54211">
    <property type="entry name" value="Ribosomal protein S5 domain 2-like"/>
    <property type="match status" value="1"/>
</dbReference>
<dbReference type="PROSITE" id="PS00360">
    <property type="entry name" value="RIBOSOMAL_S9"/>
    <property type="match status" value="1"/>
</dbReference>
<comment type="similarity">
    <text evidence="1">Belongs to the universal ribosomal protein uS9 family.</text>
</comment>
<accession>Q1JJY9</accession>
<keyword id="KW-0687">Ribonucleoprotein</keyword>
<keyword id="KW-0689">Ribosomal protein</keyword>
<feature type="chain" id="PRO_1000051341" description="Small ribosomal subunit protein uS9">
    <location>
        <begin position="1"/>
        <end position="130"/>
    </location>
</feature>
<gene>
    <name evidence="1" type="primary">rpsI</name>
    <name type="ordered locus">MGAS9429_Spy1647</name>
</gene>